<comment type="function">
    <text evidence="1">One of the early assembly proteins it binds 23S rRNA. One of the proteins that surrounds the polypeptide exit tunnel on the outside of the ribosome. Forms the main docking site for trigger factor binding to the ribosome.</text>
</comment>
<comment type="subunit">
    <text evidence="1">Part of the 50S ribosomal subunit. Contacts protein L29, and trigger factor when it is bound to the ribosome.</text>
</comment>
<comment type="similarity">
    <text evidence="1">Belongs to the universal ribosomal protein uL23 family.</text>
</comment>
<sequence>MEITSVLLKPLLTEKTTMLKDEAQQVAFMVHTQANKLEIKQAVEKAFDVKVEAVNVVRRAPLNRERQGRVVGRKPGWKKAYVTLRQGDKIEFFEGV</sequence>
<dbReference type="EMBL" id="CP001358">
    <property type="protein sequence ID" value="ACL48570.1"/>
    <property type="molecule type" value="Genomic_DNA"/>
</dbReference>
<dbReference type="SMR" id="B8IYH4"/>
<dbReference type="STRING" id="525146.Ddes_0662"/>
<dbReference type="KEGG" id="dds:Ddes_0662"/>
<dbReference type="eggNOG" id="COG0089">
    <property type="taxonomic scope" value="Bacteria"/>
</dbReference>
<dbReference type="HOGENOM" id="CLU_037562_3_1_7"/>
<dbReference type="GO" id="GO:1990904">
    <property type="term" value="C:ribonucleoprotein complex"/>
    <property type="evidence" value="ECO:0007669"/>
    <property type="project" value="UniProtKB-KW"/>
</dbReference>
<dbReference type="GO" id="GO:0005840">
    <property type="term" value="C:ribosome"/>
    <property type="evidence" value="ECO:0007669"/>
    <property type="project" value="UniProtKB-KW"/>
</dbReference>
<dbReference type="GO" id="GO:0019843">
    <property type="term" value="F:rRNA binding"/>
    <property type="evidence" value="ECO:0007669"/>
    <property type="project" value="UniProtKB-UniRule"/>
</dbReference>
<dbReference type="GO" id="GO:0003735">
    <property type="term" value="F:structural constituent of ribosome"/>
    <property type="evidence" value="ECO:0007669"/>
    <property type="project" value="InterPro"/>
</dbReference>
<dbReference type="GO" id="GO:0006412">
    <property type="term" value="P:translation"/>
    <property type="evidence" value="ECO:0007669"/>
    <property type="project" value="UniProtKB-UniRule"/>
</dbReference>
<dbReference type="FunFam" id="3.30.70.330:FF:000001">
    <property type="entry name" value="50S ribosomal protein L23"/>
    <property type="match status" value="1"/>
</dbReference>
<dbReference type="Gene3D" id="3.30.70.330">
    <property type="match status" value="1"/>
</dbReference>
<dbReference type="HAMAP" id="MF_01369_B">
    <property type="entry name" value="Ribosomal_uL23_B"/>
    <property type="match status" value="1"/>
</dbReference>
<dbReference type="InterPro" id="IPR012677">
    <property type="entry name" value="Nucleotide-bd_a/b_plait_sf"/>
</dbReference>
<dbReference type="InterPro" id="IPR013025">
    <property type="entry name" value="Ribosomal_uL23-like"/>
</dbReference>
<dbReference type="InterPro" id="IPR012678">
    <property type="entry name" value="Ribosomal_uL23/eL15/eS24_sf"/>
</dbReference>
<dbReference type="NCBIfam" id="NF004359">
    <property type="entry name" value="PRK05738.1-3"/>
    <property type="match status" value="1"/>
</dbReference>
<dbReference type="NCBIfam" id="NF004363">
    <property type="entry name" value="PRK05738.2-4"/>
    <property type="match status" value="1"/>
</dbReference>
<dbReference type="PANTHER" id="PTHR11620">
    <property type="entry name" value="60S RIBOSOMAL PROTEIN L23A"/>
    <property type="match status" value="1"/>
</dbReference>
<dbReference type="Pfam" id="PF00276">
    <property type="entry name" value="Ribosomal_L23"/>
    <property type="match status" value="1"/>
</dbReference>
<dbReference type="SUPFAM" id="SSF54189">
    <property type="entry name" value="Ribosomal proteins S24e, L23 and L15e"/>
    <property type="match status" value="1"/>
</dbReference>
<protein>
    <recommendedName>
        <fullName evidence="1">Large ribosomal subunit protein uL23</fullName>
    </recommendedName>
    <alternativeName>
        <fullName evidence="2">50S ribosomal protein L23</fullName>
    </alternativeName>
</protein>
<reference key="1">
    <citation type="submission" date="2009-01" db="EMBL/GenBank/DDBJ databases">
        <title>Complete sequence of Desulfovibrio desulfuricans subsp. desulfuricans str. ATCC 27774.</title>
        <authorList>
            <consortium name="US DOE Joint Genome Institute"/>
            <person name="Lucas S."/>
            <person name="Copeland A."/>
            <person name="Lapidus A."/>
            <person name="Glavina del Rio T."/>
            <person name="Tice H."/>
            <person name="Bruce D."/>
            <person name="Goodwin L."/>
            <person name="Pitluck S."/>
            <person name="Sims D."/>
            <person name="Lu M."/>
            <person name="Kiss H."/>
            <person name="Meineke L."/>
            <person name="Brettin T."/>
            <person name="Detter J.C."/>
            <person name="Han C."/>
            <person name="Larimer F."/>
            <person name="Land M."/>
            <person name="Hauser L."/>
            <person name="Kyrpides N."/>
            <person name="Ovchinnikova G."/>
            <person name="Hazen T.C."/>
        </authorList>
    </citation>
    <scope>NUCLEOTIDE SEQUENCE [LARGE SCALE GENOMIC DNA]</scope>
    <source>
        <strain>ATCC 27774 / DSM 6949 / MB</strain>
    </source>
</reference>
<name>RL23_DESDA</name>
<proteinExistence type="inferred from homology"/>
<organism>
    <name type="scientific">Desulfovibrio desulfuricans (strain ATCC 27774 / DSM 6949 / MB)</name>
    <dbReference type="NCBI Taxonomy" id="525146"/>
    <lineage>
        <taxon>Bacteria</taxon>
        <taxon>Pseudomonadati</taxon>
        <taxon>Thermodesulfobacteriota</taxon>
        <taxon>Desulfovibrionia</taxon>
        <taxon>Desulfovibrionales</taxon>
        <taxon>Desulfovibrionaceae</taxon>
        <taxon>Desulfovibrio</taxon>
    </lineage>
</organism>
<gene>
    <name evidence="1" type="primary">rplW</name>
    <name type="ordered locus">Ddes_0662</name>
</gene>
<feature type="chain" id="PRO_1000184084" description="Large ribosomal subunit protein uL23">
    <location>
        <begin position="1"/>
        <end position="96"/>
    </location>
</feature>
<accession>B8IYH4</accession>
<keyword id="KW-0687">Ribonucleoprotein</keyword>
<keyword id="KW-0689">Ribosomal protein</keyword>
<keyword id="KW-0694">RNA-binding</keyword>
<keyword id="KW-0699">rRNA-binding</keyword>
<evidence type="ECO:0000255" key="1">
    <source>
        <dbReference type="HAMAP-Rule" id="MF_01369"/>
    </source>
</evidence>
<evidence type="ECO:0000305" key="2"/>